<proteinExistence type="evidence at protein level"/>
<name>GLB2_MORMR</name>
<dbReference type="PIR" id="S13459">
    <property type="entry name" value="S13459"/>
</dbReference>
<dbReference type="SMR" id="P21198"/>
<dbReference type="GO" id="GO:0020037">
    <property type="term" value="F:heme binding"/>
    <property type="evidence" value="ECO:0007669"/>
    <property type="project" value="InterPro"/>
</dbReference>
<dbReference type="GO" id="GO:0005506">
    <property type="term" value="F:iron ion binding"/>
    <property type="evidence" value="ECO:0007669"/>
    <property type="project" value="InterPro"/>
</dbReference>
<dbReference type="GO" id="GO:0016491">
    <property type="term" value="F:oxidoreductase activity"/>
    <property type="evidence" value="ECO:0007669"/>
    <property type="project" value="TreeGrafter"/>
</dbReference>
<dbReference type="GO" id="GO:0019825">
    <property type="term" value="F:oxygen binding"/>
    <property type="evidence" value="ECO:0007669"/>
    <property type="project" value="InterPro"/>
</dbReference>
<dbReference type="GO" id="GO:0005344">
    <property type="term" value="F:oxygen carrier activity"/>
    <property type="evidence" value="ECO:0007669"/>
    <property type="project" value="UniProtKB-KW"/>
</dbReference>
<dbReference type="Gene3D" id="1.10.490.10">
    <property type="entry name" value="Globins"/>
    <property type="match status" value="1"/>
</dbReference>
<dbReference type="InterPro" id="IPR000971">
    <property type="entry name" value="Globin"/>
</dbReference>
<dbReference type="InterPro" id="IPR009050">
    <property type="entry name" value="Globin-like_sf"/>
</dbReference>
<dbReference type="InterPro" id="IPR012292">
    <property type="entry name" value="Globin/Proto"/>
</dbReference>
<dbReference type="InterPro" id="IPR013314">
    <property type="entry name" value="Globin_lamprey/hagfish"/>
</dbReference>
<dbReference type="PANTHER" id="PTHR46783">
    <property type="entry name" value="CYTOGLOBIN"/>
    <property type="match status" value="1"/>
</dbReference>
<dbReference type="PANTHER" id="PTHR46783:SF1">
    <property type="entry name" value="CYTOGLOBIN-1-RELATED"/>
    <property type="match status" value="1"/>
</dbReference>
<dbReference type="Pfam" id="PF00042">
    <property type="entry name" value="Globin"/>
    <property type="match status" value="1"/>
</dbReference>
<dbReference type="PRINTS" id="PR01906">
    <property type="entry name" value="FISHGLOBIN"/>
</dbReference>
<dbReference type="SUPFAM" id="SSF46458">
    <property type="entry name" value="Globin-like"/>
    <property type="match status" value="1"/>
</dbReference>
<dbReference type="PROSITE" id="PS01033">
    <property type="entry name" value="GLOBIN"/>
    <property type="match status" value="1"/>
</dbReference>
<evidence type="ECO:0000250" key="1"/>
<evidence type="ECO:0000255" key="2">
    <source>
        <dbReference type="PROSITE-ProRule" id="PRU00238"/>
    </source>
</evidence>
<accession>P21198</accession>
<feature type="initiator methionine" description="Removed" evidence="1">
    <location>
        <position position="1"/>
    </location>
</feature>
<feature type="chain" id="PRO_0000052531" description="Globin-2">
    <location>
        <begin position="2"/>
        <end position="150"/>
    </location>
</feature>
<feature type="domain" description="Globin" evidence="2">
    <location>
        <begin position="11"/>
        <end position="150"/>
    </location>
</feature>
<feature type="binding site" description="distal binding residue" evidence="2">
    <location>
        <position position="74"/>
    </location>
    <ligand>
        <name>heme b</name>
        <dbReference type="ChEBI" id="CHEBI:60344"/>
    </ligand>
    <ligandPart>
        <name>Fe</name>
        <dbReference type="ChEBI" id="CHEBI:18248"/>
    </ligandPart>
</feature>
<feature type="binding site" description="proximal binding residue" evidence="2">
    <location>
        <position position="106"/>
    </location>
    <ligand>
        <name>heme b</name>
        <dbReference type="ChEBI" id="CHEBI:60344"/>
    </ligand>
    <ligandPart>
        <name>Fe</name>
        <dbReference type="ChEBI" id="CHEBI:18248"/>
    </ligandPart>
</feature>
<keyword id="KW-0903">Direct protein sequencing</keyword>
<keyword id="KW-0349">Heme</keyword>
<keyword id="KW-0408">Iron</keyword>
<keyword id="KW-0479">Metal-binding</keyword>
<keyword id="KW-0561">Oxygen transport</keyword>
<keyword id="KW-0813">Transport</keyword>
<organism>
    <name type="scientific">Mordacia mordax</name>
    <name type="common">Southern hemisphere lamprey</name>
    <dbReference type="NCBI Taxonomy" id="7755"/>
    <lineage>
        <taxon>Eukaryota</taxon>
        <taxon>Metazoa</taxon>
        <taxon>Chordata</taxon>
        <taxon>Craniata</taxon>
        <taxon>Vertebrata</taxon>
        <taxon>Cyclostomata</taxon>
        <taxon>Hyperoartia</taxon>
        <taxon>Petromyzontiformes</taxon>
        <taxon>Petromyzontidae</taxon>
        <taxon>Mordacia</taxon>
    </lineage>
</organism>
<sequence>MPIVDSGSVSPLSDAEKNKIRAAWDIVYKNYEKNGVDILVKFFTGTPAAQAFFPKFKGLTTADALKKSSDVRWHAERIINAVNDAVKSMDDTEKMSMKLQELSVKHAQSFYVDRQYFKVLAGIIADTTAPGDAGFEKLMSMICILLSSAY</sequence>
<comment type="subunit">
    <text>Monomer.</text>
</comment>
<comment type="similarity">
    <text evidence="2">Belongs to the globin family.</text>
</comment>
<protein>
    <recommendedName>
        <fullName>Globin-2</fullName>
    </recommendedName>
    <alternativeName>
        <fullName>Hemoglobin II</fullName>
    </alternativeName>
</protein>
<reference key="1">
    <citation type="journal article" date="1991" name="Biol. Chem. Hoppe-Seyler">
        <title>The primary structure of the hemoglobins of a southern hemisphere lamprey (Mordacia mordax, Cyclostomata).</title>
        <authorList>
            <person name="Hombrados I."/>
            <person name="Vidal Y."/>
            <person name="Rodewald K."/>
            <person name="Braunitzer G."/>
            <person name="Neuzil E."/>
        </authorList>
    </citation>
    <scope>PROTEIN SEQUENCE OF 2-150</scope>
</reference>